<keyword id="KW-1003">Cell membrane</keyword>
<keyword id="KW-0472">Membrane</keyword>
<keyword id="KW-0812">Transmembrane</keyword>
<keyword id="KW-1133">Transmembrane helix</keyword>
<name>Y1816_NEIM0</name>
<dbReference type="EMBL" id="CP000381">
    <property type="protein sequence ID" value="ABX73955.1"/>
    <property type="molecule type" value="Genomic_DNA"/>
</dbReference>
<dbReference type="RefSeq" id="WP_012222035.1">
    <property type="nucleotide sequence ID" value="NC_010120.1"/>
</dbReference>
<dbReference type="KEGG" id="nmn:NMCC_1816"/>
<dbReference type="HOGENOM" id="CLU_125889_0_0_4"/>
<dbReference type="Proteomes" id="UP000001177">
    <property type="component" value="Chromosome"/>
</dbReference>
<dbReference type="GO" id="GO:0005886">
    <property type="term" value="C:plasma membrane"/>
    <property type="evidence" value="ECO:0007669"/>
    <property type="project" value="UniProtKB-SubCell"/>
</dbReference>
<dbReference type="HAMAP" id="MF_01874">
    <property type="entry name" value="UPF0756"/>
    <property type="match status" value="1"/>
</dbReference>
<dbReference type="InterPro" id="IPR007382">
    <property type="entry name" value="UPF0756_TM"/>
</dbReference>
<dbReference type="PANTHER" id="PTHR38452">
    <property type="entry name" value="UPF0756 MEMBRANE PROTEIN YEAL"/>
    <property type="match status" value="1"/>
</dbReference>
<dbReference type="PANTHER" id="PTHR38452:SF1">
    <property type="entry name" value="UPF0756 MEMBRANE PROTEIN YEAL"/>
    <property type="match status" value="1"/>
</dbReference>
<dbReference type="Pfam" id="PF04284">
    <property type="entry name" value="DUF441"/>
    <property type="match status" value="1"/>
</dbReference>
<sequence>MNVSFAPLFLVTLILLGVVSNNNSITISATILLLMQQTALIQFVPLVEKHGLNLGIILLTIGVLSPLVSGKAQVPPVAEFLNFKMISAVFIGIFVAWLAGRGVPLMGQQPVLITGLLIGTVIGVAFMGGIPVGPLIAAGILSFVVGKG</sequence>
<accession>A9M2Z3</accession>
<protein>
    <recommendedName>
        <fullName evidence="1">UPF0756 membrane protein NMCC_1816</fullName>
    </recommendedName>
</protein>
<reference key="1">
    <citation type="journal article" date="2008" name="Genomics">
        <title>Characterization of ST-4821 complex, a unique Neisseria meningitidis clone.</title>
        <authorList>
            <person name="Peng J."/>
            <person name="Yang L."/>
            <person name="Yang F."/>
            <person name="Yang J."/>
            <person name="Yan Y."/>
            <person name="Nie H."/>
            <person name="Zhang X."/>
            <person name="Xiong Z."/>
            <person name="Jiang Y."/>
            <person name="Cheng F."/>
            <person name="Xu X."/>
            <person name="Chen S."/>
            <person name="Sun L."/>
            <person name="Li W."/>
            <person name="Shen Y."/>
            <person name="Shao Z."/>
            <person name="Liang X."/>
            <person name="Xu J."/>
            <person name="Jin Q."/>
        </authorList>
    </citation>
    <scope>NUCLEOTIDE SEQUENCE [LARGE SCALE GENOMIC DNA]</scope>
    <source>
        <strain>053442</strain>
    </source>
</reference>
<comment type="subcellular location">
    <subcellularLocation>
        <location evidence="1">Cell membrane</location>
        <topology evidence="1">Multi-pass membrane protein</topology>
    </subcellularLocation>
</comment>
<comment type="similarity">
    <text evidence="1">Belongs to the UPF0756 family.</text>
</comment>
<organism>
    <name type="scientific">Neisseria meningitidis serogroup C (strain 053442)</name>
    <dbReference type="NCBI Taxonomy" id="374833"/>
    <lineage>
        <taxon>Bacteria</taxon>
        <taxon>Pseudomonadati</taxon>
        <taxon>Pseudomonadota</taxon>
        <taxon>Betaproteobacteria</taxon>
        <taxon>Neisseriales</taxon>
        <taxon>Neisseriaceae</taxon>
        <taxon>Neisseria</taxon>
    </lineage>
</organism>
<proteinExistence type="inferred from homology"/>
<evidence type="ECO:0000255" key="1">
    <source>
        <dbReference type="HAMAP-Rule" id="MF_01874"/>
    </source>
</evidence>
<gene>
    <name type="ordered locus">NMCC_1816</name>
</gene>
<feature type="chain" id="PRO_0000388911" description="UPF0756 membrane protein NMCC_1816">
    <location>
        <begin position="1"/>
        <end position="148"/>
    </location>
</feature>
<feature type="transmembrane region" description="Helical" evidence="1">
    <location>
        <begin position="13"/>
        <end position="35"/>
    </location>
</feature>
<feature type="transmembrane region" description="Helical" evidence="1">
    <location>
        <begin position="50"/>
        <end position="70"/>
    </location>
</feature>
<feature type="transmembrane region" description="Helical" evidence="1">
    <location>
        <begin position="80"/>
        <end position="100"/>
    </location>
</feature>
<feature type="transmembrane region" description="Helical" evidence="1">
    <location>
        <begin position="121"/>
        <end position="141"/>
    </location>
</feature>